<sequence>MSGDCIASLKMVESQPLNSKEVEYVEKLLDPFDPVDTVERFTHNPNDPISVPIDPALIWSRKAIMRLIGLVVVLIINFPKVRDKINLNPYLVWVITTLILMGVFY</sequence>
<organismHost>
    <name type="scientific">Aedes vexans</name>
    <name type="common">Inland floodwater mosquito</name>
    <name type="synonym">Culex vexans</name>
    <dbReference type="NCBI Taxonomy" id="7163"/>
</organismHost>
<organismHost>
    <name type="scientific">Culex territans</name>
    <dbReference type="NCBI Taxonomy" id="42431"/>
</organismHost>
<organismHost>
    <name type="scientific">Culiseta annulata</name>
    <dbReference type="NCBI Taxonomy" id="332058"/>
</organismHost>
<organismHost>
    <name type="scientific">Ochlerotatus sollicitans</name>
    <name type="common">eastern saltmarsh mosquito</name>
    <dbReference type="NCBI Taxonomy" id="310513"/>
</organismHost>
<organismHost>
    <name type="scientific">Ochlerotatus taeniorhynchus</name>
    <name type="common">Black salt marsh mosquito</name>
    <name type="synonym">Aedes taeniorhynchus</name>
    <dbReference type="NCBI Taxonomy" id="329105"/>
</organismHost>
<organismHost>
    <name type="scientific">Psorophora ferox</name>
    <dbReference type="NCBI Taxonomy" id="7183"/>
</organismHost>
<reference key="1">
    <citation type="journal article" date="2006" name="J. Virol.">
        <title>Genome of invertebrate iridescent virus type 3 (mosquito iridescent virus).</title>
        <authorList>
            <person name="Delhon G."/>
            <person name="Tulman E.R."/>
            <person name="Afonso C.L."/>
            <person name="Lu Z."/>
            <person name="Becnel J.J."/>
            <person name="Moser B.A."/>
            <person name="Kutish G.F."/>
            <person name="Rock D.L."/>
        </authorList>
    </citation>
    <scope>NUCLEOTIDE SEQUENCE [LARGE SCALE GENOMIC DNA]</scope>
</reference>
<comment type="subcellular location">
    <subcellularLocation>
        <location evidence="2">Membrane</location>
        <topology evidence="2">Multi-pass membrane protein</topology>
    </subcellularLocation>
</comment>
<organism>
    <name type="scientific">Invertebrate iridescent virus 3</name>
    <name type="common">IIV-3</name>
    <name type="synonym">Mosquito iridescent virus</name>
    <dbReference type="NCBI Taxonomy" id="345201"/>
    <lineage>
        <taxon>Viruses</taxon>
        <taxon>Varidnaviria</taxon>
        <taxon>Bamfordvirae</taxon>
        <taxon>Nucleocytoviricota</taxon>
        <taxon>Megaviricetes</taxon>
        <taxon>Pimascovirales</taxon>
        <taxon>Iridoviridae</taxon>
        <taxon>Betairidovirinae</taxon>
        <taxon>Chloriridovirus</taxon>
    </lineage>
</organism>
<evidence type="ECO:0000255" key="1"/>
<evidence type="ECO:0000305" key="2"/>
<protein>
    <recommendedName>
        <fullName>Uncharacterized protein 126R</fullName>
    </recommendedName>
</protein>
<feature type="chain" id="PRO_0000377823" description="Uncharacterized protein 126R">
    <location>
        <begin position="1"/>
        <end position="105"/>
    </location>
</feature>
<feature type="transmembrane region" description="Helical" evidence="1">
    <location>
        <begin position="56"/>
        <end position="76"/>
    </location>
</feature>
<feature type="transmembrane region" description="Helical" evidence="1">
    <location>
        <begin position="85"/>
        <end position="105"/>
    </location>
</feature>
<keyword id="KW-0472">Membrane</keyword>
<keyword id="KW-1185">Reference proteome</keyword>
<keyword id="KW-0812">Transmembrane</keyword>
<keyword id="KW-1133">Transmembrane helix</keyword>
<proteinExistence type="predicted"/>
<dbReference type="EMBL" id="DQ643392">
    <property type="protein sequence ID" value="ABF82156.1"/>
    <property type="molecule type" value="Genomic_DNA"/>
</dbReference>
<dbReference type="RefSeq" id="YP_654698.1">
    <property type="nucleotide sequence ID" value="NC_008187.1"/>
</dbReference>
<dbReference type="KEGG" id="vg:4156337"/>
<dbReference type="OrthoDB" id="24201at10239"/>
<dbReference type="Proteomes" id="UP000001358">
    <property type="component" value="Genome"/>
</dbReference>
<dbReference type="GO" id="GO:0016020">
    <property type="term" value="C:membrane"/>
    <property type="evidence" value="ECO:0007669"/>
    <property type="project" value="UniProtKB-SubCell"/>
</dbReference>
<accession>Q196T4</accession>
<name>126R_IIV3</name>
<gene>
    <name type="ORF">IIV3-126R</name>
</gene>